<keyword id="KW-0004">4Fe-4S</keyword>
<keyword id="KW-0408">Iron</keyword>
<keyword id="KW-0411">Iron-sulfur</keyword>
<keyword id="KW-0479">Metal-binding</keyword>
<keyword id="KW-0500">Molybdenum</keyword>
<keyword id="KW-0560">Oxidoreductase</keyword>
<keyword id="KW-1185">Reference proteome</keyword>
<feature type="chain" id="PRO_0000063243" description="Uncharacterized oxidoreductase Rv2900c">
    <location>
        <begin position="1"/>
        <end position="779"/>
    </location>
</feature>
<feature type="binding site" evidence="1">
    <location>
        <position position="72"/>
    </location>
    <ligand>
        <name>[4Fe-4S] cluster</name>
        <dbReference type="ChEBI" id="CHEBI:49883"/>
    </ligand>
</feature>
<feature type="binding site" evidence="1">
    <location>
        <position position="75"/>
    </location>
    <ligand>
        <name>[4Fe-4S] cluster</name>
        <dbReference type="ChEBI" id="CHEBI:49883"/>
    </ligand>
</feature>
<sequence length="779" mass="84566">MYVEAVRWQRSAASRDVLADYDEQAVTVAPRKREAAGVRAVMVSLQRGMQQMGALRTAAALARLNQRNGFDCPGCAWPEEPGGRKLAEFCENGAKAVAEEATKRTVTAEFFARHSVAELSAKPEYWLSQQGRLAHPMVLRPGDDHYRPISWDAAYQLIAEQLNGLDSPDRAVFYTSGRTSNEAAFCYQLLVRSFGTNNLPDCSNMCHESSGAALTDSIGIGKGSVTIGDVEHADLIVIAGQNPGTNHPRMLSVLGKAKANGAKIIAVNPLPEAGLIRFKDPQKVNGVVGHGIPIADEFVQIRLGGDMALFAGLGRLLLEAEERVPGSVVDRSFVDNHCAGFDGYRRRTLQVGLDTVMDATGIELAQLQRVAAMLMASQRTVICWAMGLTQHAHAVATIGEVTNVLLLRGMIGKPGAGVCPVRGHSNVQGDRTMGIWEKMPEQFLAALDREFGITSPRAHGFDTVAAIRAMRDGRVSVFMGMGGNFASATPDTAVTEAALRRCALTVQVSTKLNRSHLVHGATALILPTLGRTDRDTRNGRKQLVSVEDSMSMVHLSRGSLHPPSDQVRSEVQIICQLARALFGPGHPVPWERFADDYDTIRDAIAAVVPGCDDYNHKVRVPDGFQLPHPPRDAREFRTSTGKANFAVNPLQWVPVPPGRLVLQTLRSHDQYNTTIYGLDDRYRGVKGGRRVVFINPADIETFGLTAGDRVDLVSEWTDGQGGLQERRAKDFLVVAYSTPVGNAAAYYPETNPLVPLDHTAAQSNTPVSKAIIVRLEPTA</sequence>
<proteinExistence type="evidence at protein level"/>
<gene>
    <name type="ordered locus">Rv2900c</name>
    <name type="ORF">MTCY274.31c</name>
</gene>
<organism>
    <name type="scientific">Mycobacterium tuberculosis (strain ATCC 25618 / H37Rv)</name>
    <dbReference type="NCBI Taxonomy" id="83332"/>
    <lineage>
        <taxon>Bacteria</taxon>
        <taxon>Bacillati</taxon>
        <taxon>Actinomycetota</taxon>
        <taxon>Actinomycetes</taxon>
        <taxon>Mycobacteriales</taxon>
        <taxon>Mycobacteriaceae</taxon>
        <taxon>Mycobacterium</taxon>
        <taxon>Mycobacterium tuberculosis complex</taxon>
    </lineage>
</organism>
<accession>P9WJP9</accession>
<accession>L0TDW4</accession>
<accession>P65408</accession>
<accession>Q10821</accession>
<comment type="cofactor">
    <cofactor evidence="2">
        <name>[4Fe-4S] cluster</name>
        <dbReference type="ChEBI" id="CHEBI:49883"/>
    </cofactor>
    <text evidence="2">Binds 1 [4Fe-4S] cluster.</text>
</comment>
<comment type="cofactor">
    <cofactor evidence="1">
        <name>Mo-bis(molybdopterin guanine dinucleotide)</name>
        <dbReference type="ChEBI" id="CHEBI:60539"/>
    </cofactor>
    <text evidence="1">Binds 1 molybdenum-bis(molybdopterin guanine dinucleotide) (Mo-bis-MGD) cofactor per subunit.</text>
</comment>
<comment type="miscellaneous">
    <text>Was identified as a high-confidence drug target.</text>
</comment>
<comment type="similarity">
    <text evidence="2">Belongs to the prokaryotic molybdopterin-containing oxidoreductase family.</text>
</comment>
<protein>
    <recommendedName>
        <fullName>Uncharacterized oxidoreductase Rv2900c</fullName>
        <ecNumber>1.-.-.-</ecNumber>
    </recommendedName>
</protein>
<dbReference type="EC" id="1.-.-.-"/>
<dbReference type="EMBL" id="AL123456">
    <property type="protein sequence ID" value="CCP45702.1"/>
    <property type="molecule type" value="Genomic_DNA"/>
</dbReference>
<dbReference type="PIR" id="G70926">
    <property type="entry name" value="G70926"/>
</dbReference>
<dbReference type="RefSeq" id="WP_003899532.1">
    <property type="nucleotide sequence ID" value="NZ_NVQJ01000006.1"/>
</dbReference>
<dbReference type="SMR" id="P9WJP9"/>
<dbReference type="FunCoup" id="P9WJP9">
    <property type="interactions" value="1"/>
</dbReference>
<dbReference type="STRING" id="83332.Rv2900c"/>
<dbReference type="PaxDb" id="83332-Rv2900c"/>
<dbReference type="DNASU" id="887987"/>
<dbReference type="KEGG" id="mtu:Rv2900c"/>
<dbReference type="KEGG" id="mtv:RVBD_2900c"/>
<dbReference type="TubercuList" id="Rv2900c"/>
<dbReference type="eggNOG" id="COG0243">
    <property type="taxonomic scope" value="Bacteria"/>
</dbReference>
<dbReference type="InParanoid" id="P9WJP9"/>
<dbReference type="OrthoDB" id="5287431at2"/>
<dbReference type="PhylomeDB" id="P9WJP9"/>
<dbReference type="Proteomes" id="UP000001584">
    <property type="component" value="Chromosome"/>
</dbReference>
<dbReference type="GO" id="GO:0016020">
    <property type="term" value="C:membrane"/>
    <property type="evidence" value="ECO:0000318"/>
    <property type="project" value="GO_Central"/>
</dbReference>
<dbReference type="GO" id="GO:0005886">
    <property type="term" value="C:plasma membrane"/>
    <property type="evidence" value="ECO:0007005"/>
    <property type="project" value="MTBBASE"/>
</dbReference>
<dbReference type="GO" id="GO:0051539">
    <property type="term" value="F:4 iron, 4 sulfur cluster binding"/>
    <property type="evidence" value="ECO:0007669"/>
    <property type="project" value="UniProtKB-KW"/>
</dbReference>
<dbReference type="GO" id="GO:0008863">
    <property type="term" value="F:formate dehydrogenase (NAD+) activity"/>
    <property type="evidence" value="ECO:0007669"/>
    <property type="project" value="InterPro"/>
</dbReference>
<dbReference type="GO" id="GO:0030151">
    <property type="term" value="F:molybdenum ion binding"/>
    <property type="evidence" value="ECO:0007669"/>
    <property type="project" value="InterPro"/>
</dbReference>
<dbReference type="GO" id="GO:0043546">
    <property type="term" value="F:molybdopterin cofactor binding"/>
    <property type="evidence" value="ECO:0007669"/>
    <property type="project" value="InterPro"/>
</dbReference>
<dbReference type="CDD" id="cd02787">
    <property type="entry name" value="MopB_CT_ydeP"/>
    <property type="match status" value="1"/>
</dbReference>
<dbReference type="CDD" id="cd02767">
    <property type="entry name" value="MopB_ydeP"/>
    <property type="match status" value="1"/>
</dbReference>
<dbReference type="FunFam" id="3.40.228.10:FF:000002">
    <property type="entry name" value="Formate dehydrogenase subunit alpha"/>
    <property type="match status" value="1"/>
</dbReference>
<dbReference type="Gene3D" id="3.40.50.740">
    <property type="match status" value="1"/>
</dbReference>
<dbReference type="Gene3D" id="3.40.228.10">
    <property type="entry name" value="Dimethylsulfoxide Reductase, domain 2"/>
    <property type="match status" value="1"/>
</dbReference>
<dbReference type="InterPro" id="IPR009010">
    <property type="entry name" value="Asp_de-COase-like_dom_sf"/>
</dbReference>
<dbReference type="InterPro" id="IPR037951">
    <property type="entry name" value="MopB_CT_YdeP"/>
</dbReference>
<dbReference type="InterPro" id="IPR006657">
    <property type="entry name" value="MoPterin_dinucl-bd_dom"/>
</dbReference>
<dbReference type="InterPro" id="IPR006656">
    <property type="entry name" value="Mopterin_OxRdtase"/>
</dbReference>
<dbReference type="InterPro" id="IPR010046">
    <property type="entry name" value="Mopterin_OxRdtse_a_bac"/>
</dbReference>
<dbReference type="InterPro" id="IPR050123">
    <property type="entry name" value="Prok_molybdopt-oxidoreductase"/>
</dbReference>
<dbReference type="InterPro" id="IPR041953">
    <property type="entry name" value="YdeP_MopB"/>
</dbReference>
<dbReference type="NCBIfam" id="TIGR01701">
    <property type="entry name" value="Fdhalpha-like"/>
    <property type="match status" value="1"/>
</dbReference>
<dbReference type="PANTHER" id="PTHR43105:SF4">
    <property type="entry name" value="PROTEIN YDEP"/>
    <property type="match status" value="1"/>
</dbReference>
<dbReference type="PANTHER" id="PTHR43105">
    <property type="entry name" value="RESPIRATORY NITRATE REDUCTASE"/>
    <property type="match status" value="1"/>
</dbReference>
<dbReference type="Pfam" id="PF00384">
    <property type="entry name" value="Molybdopterin"/>
    <property type="match status" value="1"/>
</dbReference>
<dbReference type="Pfam" id="PF01568">
    <property type="entry name" value="Molydop_binding"/>
    <property type="match status" value="1"/>
</dbReference>
<dbReference type="PIRSF" id="PIRSF000144">
    <property type="entry name" value="CbbBc"/>
    <property type="match status" value="1"/>
</dbReference>
<dbReference type="SUPFAM" id="SSF50692">
    <property type="entry name" value="ADC-like"/>
    <property type="match status" value="1"/>
</dbReference>
<dbReference type="SUPFAM" id="SSF53706">
    <property type="entry name" value="Formate dehydrogenase/DMSO reductase, domains 1-3"/>
    <property type="match status" value="1"/>
</dbReference>
<reference key="1">
    <citation type="journal article" date="1998" name="Nature">
        <title>Deciphering the biology of Mycobacterium tuberculosis from the complete genome sequence.</title>
        <authorList>
            <person name="Cole S.T."/>
            <person name="Brosch R."/>
            <person name="Parkhill J."/>
            <person name="Garnier T."/>
            <person name="Churcher C.M."/>
            <person name="Harris D.E."/>
            <person name="Gordon S.V."/>
            <person name="Eiglmeier K."/>
            <person name="Gas S."/>
            <person name="Barry C.E. III"/>
            <person name="Tekaia F."/>
            <person name="Badcock K."/>
            <person name="Basham D."/>
            <person name="Brown D."/>
            <person name="Chillingworth T."/>
            <person name="Connor R."/>
            <person name="Davies R.M."/>
            <person name="Devlin K."/>
            <person name="Feltwell T."/>
            <person name="Gentles S."/>
            <person name="Hamlin N."/>
            <person name="Holroyd S."/>
            <person name="Hornsby T."/>
            <person name="Jagels K."/>
            <person name="Krogh A."/>
            <person name="McLean J."/>
            <person name="Moule S."/>
            <person name="Murphy L.D."/>
            <person name="Oliver S."/>
            <person name="Osborne J."/>
            <person name="Quail M.A."/>
            <person name="Rajandream M.A."/>
            <person name="Rogers J."/>
            <person name="Rutter S."/>
            <person name="Seeger K."/>
            <person name="Skelton S."/>
            <person name="Squares S."/>
            <person name="Squares R."/>
            <person name="Sulston J.E."/>
            <person name="Taylor K."/>
            <person name="Whitehead S."/>
            <person name="Barrell B.G."/>
        </authorList>
    </citation>
    <scope>NUCLEOTIDE SEQUENCE [LARGE SCALE GENOMIC DNA]</scope>
    <source>
        <strain>ATCC 25618 / H37Rv</strain>
    </source>
</reference>
<reference key="2">
    <citation type="journal article" date="2008" name="BMC Syst. Biol.">
        <title>targetTB: a target identification pipeline for Mycobacterium tuberculosis through an interactome, reactome and genome-scale structural analysis.</title>
        <authorList>
            <person name="Raman K."/>
            <person name="Yeturu K."/>
            <person name="Chandra N."/>
        </authorList>
    </citation>
    <scope>IDENTIFICATION AS A DRUG TARGET [LARGE SCALE ANALYSIS]</scope>
</reference>
<reference key="3">
    <citation type="journal article" date="2011" name="Mol. Cell. Proteomics">
        <title>Proteogenomic analysis of Mycobacterium tuberculosis by high resolution mass spectrometry.</title>
        <authorList>
            <person name="Kelkar D.S."/>
            <person name="Kumar D."/>
            <person name="Kumar P."/>
            <person name="Balakrishnan L."/>
            <person name="Muthusamy B."/>
            <person name="Yadav A.K."/>
            <person name="Shrivastava P."/>
            <person name="Marimuthu A."/>
            <person name="Anand S."/>
            <person name="Sundaram H."/>
            <person name="Kingsbury R."/>
            <person name="Harsha H.C."/>
            <person name="Nair B."/>
            <person name="Prasad T.S."/>
            <person name="Chauhan D.S."/>
            <person name="Katoch K."/>
            <person name="Katoch V.M."/>
            <person name="Kumar P."/>
            <person name="Chaerkady R."/>
            <person name="Ramachandran S."/>
            <person name="Dash D."/>
            <person name="Pandey A."/>
        </authorList>
    </citation>
    <scope>IDENTIFICATION BY MASS SPECTROMETRY [LARGE SCALE ANALYSIS]</scope>
    <source>
        <strain>ATCC 25618 / H37Rv</strain>
    </source>
</reference>
<evidence type="ECO:0000250" key="1"/>
<evidence type="ECO:0000305" key="2"/>
<name>Y2900_MYCTU</name>